<accession>O79431</accession>
<comment type="function">
    <text evidence="1 3">Subunit 8, of the mitochondrial membrane ATP synthase complex (F(1)F(0) ATP synthase or Complex V) that produces ATP from ADP in the presence of a proton gradient across the membrane which is generated by electron transport complexes of the respiratory chain. ATP synthase complex consist of a soluble F(1) head domain - the catalytic core - and a membrane F(1) domain - the membrane proton channel. These two domains are linked by a central stalk rotating inside the F(1) region and a stationary peripheral stalk. During catalysis, ATP synthesis in the catalytic domain of F(1) is coupled via a rotary mechanism of the central stalk subunits to proton translocation (By similarity). In vivo, can only synthesize ATP although its ATP hydrolase activity can be activated artificially in vitro (By similarity). Part of the complex F(0) domain (By similarity).</text>
</comment>
<comment type="subunit">
    <text evidence="1">Component of the ATP synthase complex composed at least of ATP5F1A/subunit alpha, ATP5F1B/subunit beta, ATP5MC1/subunit c (homooctomer), MT-ATP6/subunit a, MT-ATP8/subunit 8, ATP5ME/subunit e, ATP5MF/subunit f, ATP5MG/subunit g, ATP5MK/subunit k, ATP5MJ/subunit j, ATP5F1C/subunit gamma, ATP5F1D/subunit delta, ATP5F1E/subunit epsilon, ATP5PF/subunit F6, ATP5PB/subunit b, ATP5PD/subunit d, ATP5PO/subunit OSCP. ATP synthase complex consists of a soluble F(1) head domain (subunits alpha(3) and beta(3)) - the catalytic core - and a membrane F(0) domain - the membrane proton channel (subunits c, a, 8, e, f, g, k and j). These two domains are linked by a central stalk (subunits gamma, delta, and epsilon) rotating inside the F1 region and a stationary peripheral stalk (subunits F6, b, d, and OSCP). Interacts with PRICKLE3.</text>
</comment>
<comment type="subcellular location">
    <subcellularLocation>
        <location>Mitochondrion membrane</location>
        <topology>Single-pass membrane protein</topology>
    </subcellularLocation>
</comment>
<comment type="similarity">
    <text evidence="5">Belongs to the ATPase protein 8 family.</text>
</comment>
<feature type="chain" id="PRO_0000195577" description="ATP synthase F(0) complex subunit 8">
    <location>
        <begin position="1"/>
        <end position="67"/>
    </location>
</feature>
<feature type="transmembrane region" description="Helical" evidence="4">
    <location>
        <begin position="8"/>
        <end position="24"/>
    </location>
</feature>
<feature type="modified residue" description="N6-acetyllysine; alternate" evidence="2">
    <location>
        <position position="54"/>
    </location>
</feature>
<feature type="modified residue" description="N6-succinyllysine; alternate" evidence="2">
    <location>
        <position position="54"/>
    </location>
</feature>
<feature type="modified residue" description="N6-acetyllysine" evidence="2">
    <location>
        <position position="57"/>
    </location>
</feature>
<sequence length="67" mass="7892">MPQLDTSTWFTTIVAMILSLFILMQLKFHKYTYPMNPVLKALESTSFPCPWETKWTKIYSPLSLPQH</sequence>
<proteinExistence type="inferred from homology"/>
<protein>
    <recommendedName>
        <fullName evidence="1">ATP synthase F(0) complex subunit 8</fullName>
    </recommendedName>
    <alternativeName>
        <fullName>A6L</fullName>
    </alternativeName>
    <alternativeName>
        <fullName>Chargerin II</fullName>
    </alternativeName>
    <alternativeName>
        <fullName>F-ATPase subunit 8</fullName>
    </alternativeName>
</protein>
<evidence type="ECO:0000250" key="1">
    <source>
        <dbReference type="UniProtKB" id="P03928"/>
    </source>
</evidence>
<evidence type="ECO:0000250" key="2">
    <source>
        <dbReference type="UniProtKB" id="P03930"/>
    </source>
</evidence>
<evidence type="ECO:0000250" key="3">
    <source>
        <dbReference type="UniProtKB" id="P19483"/>
    </source>
</evidence>
<evidence type="ECO:0000255" key="4"/>
<evidence type="ECO:0000305" key="5"/>
<evidence type="ECO:0000312" key="6">
    <source>
        <dbReference type="Proteomes" id="UP000001811"/>
    </source>
</evidence>
<dbReference type="EMBL" id="AJ001588">
    <property type="protein sequence ID" value="CAA04851.1"/>
    <property type="molecule type" value="Genomic_DNA"/>
</dbReference>
<dbReference type="PIR" id="T11484">
    <property type="entry name" value="T11484"/>
</dbReference>
<dbReference type="RefSeq" id="NP_007553.1">
    <property type="nucleotide sequence ID" value="NC_001913.1"/>
</dbReference>
<dbReference type="SMR" id="O79431"/>
<dbReference type="FunCoup" id="O79431">
    <property type="interactions" value="32"/>
</dbReference>
<dbReference type="STRING" id="9986.ENSOCUP00000026183"/>
<dbReference type="PaxDb" id="9986-ENSOCUP00000026183"/>
<dbReference type="Ensembl" id="ENSOCUT00000033126.1">
    <property type="protein sequence ID" value="ENSOCUP00000026183.1"/>
    <property type="gene ID" value="ENSOCUG00000029101.1"/>
</dbReference>
<dbReference type="GeneID" id="808228"/>
<dbReference type="KEGG" id="ocu:808228"/>
<dbReference type="CTD" id="4509"/>
<dbReference type="eggNOG" id="ENOG502T21P">
    <property type="taxonomic scope" value="Eukaryota"/>
</dbReference>
<dbReference type="GeneTree" id="ENSGT00390000008771"/>
<dbReference type="HOGENOM" id="CLU_2811757_0_0_1"/>
<dbReference type="InParanoid" id="O79431"/>
<dbReference type="OMA" id="LDTSTWF"/>
<dbReference type="OrthoDB" id="9835073at2759"/>
<dbReference type="TreeFam" id="TF343854"/>
<dbReference type="Proteomes" id="UP000001811">
    <property type="component" value="Mitochondrion"/>
</dbReference>
<dbReference type="Bgee" id="ENSOCUG00000029101">
    <property type="expression patterns" value="Expressed in skin of back and 16 other cell types or tissues"/>
</dbReference>
<dbReference type="ExpressionAtlas" id="O79431">
    <property type="expression patterns" value="baseline"/>
</dbReference>
<dbReference type="GO" id="GO:0031966">
    <property type="term" value="C:mitochondrial membrane"/>
    <property type="evidence" value="ECO:0007669"/>
    <property type="project" value="UniProtKB-SubCell"/>
</dbReference>
<dbReference type="GO" id="GO:0045259">
    <property type="term" value="C:proton-transporting ATP synthase complex"/>
    <property type="evidence" value="ECO:0000250"/>
    <property type="project" value="UniProtKB"/>
</dbReference>
<dbReference type="GO" id="GO:0015078">
    <property type="term" value="F:proton transmembrane transporter activity"/>
    <property type="evidence" value="ECO:0007669"/>
    <property type="project" value="InterPro"/>
</dbReference>
<dbReference type="GO" id="GO:0015986">
    <property type="term" value="P:proton motive force-driven ATP synthesis"/>
    <property type="evidence" value="ECO:0007669"/>
    <property type="project" value="InterPro"/>
</dbReference>
<dbReference type="InterPro" id="IPR039017">
    <property type="entry name" value="ATP8_mammal"/>
</dbReference>
<dbReference type="InterPro" id="IPR001421">
    <property type="entry name" value="ATP8_metazoa"/>
</dbReference>
<dbReference type="PANTHER" id="PTHR13722">
    <property type="entry name" value="ATP SYNTHASE PROTEIN 8"/>
    <property type="match status" value="1"/>
</dbReference>
<dbReference type="PANTHER" id="PTHR13722:SF0">
    <property type="entry name" value="ATP SYNTHASE PROTEIN 8"/>
    <property type="match status" value="1"/>
</dbReference>
<dbReference type="Pfam" id="PF00895">
    <property type="entry name" value="ATP-synt_8"/>
    <property type="match status" value="1"/>
</dbReference>
<name>ATP8_RABIT</name>
<keyword id="KW-0007">Acetylation</keyword>
<keyword id="KW-0066">ATP synthesis</keyword>
<keyword id="KW-0138">CF(0)</keyword>
<keyword id="KW-0375">Hydrogen ion transport</keyword>
<keyword id="KW-0406">Ion transport</keyword>
<keyword id="KW-0472">Membrane</keyword>
<keyword id="KW-0496">Mitochondrion</keyword>
<keyword id="KW-1185">Reference proteome</keyword>
<keyword id="KW-0812">Transmembrane</keyword>
<keyword id="KW-1133">Transmembrane helix</keyword>
<keyword id="KW-0813">Transport</keyword>
<organism>
    <name type="scientific">Oryctolagus cuniculus</name>
    <name type="common">Rabbit</name>
    <dbReference type="NCBI Taxonomy" id="9986"/>
    <lineage>
        <taxon>Eukaryota</taxon>
        <taxon>Metazoa</taxon>
        <taxon>Chordata</taxon>
        <taxon>Craniata</taxon>
        <taxon>Vertebrata</taxon>
        <taxon>Euteleostomi</taxon>
        <taxon>Mammalia</taxon>
        <taxon>Eutheria</taxon>
        <taxon>Euarchontoglires</taxon>
        <taxon>Glires</taxon>
        <taxon>Lagomorpha</taxon>
        <taxon>Leporidae</taxon>
        <taxon>Oryctolagus</taxon>
    </lineage>
</organism>
<reference key="1">
    <citation type="journal article" date="1998" name="Genomics">
        <title>The complete mitochondrial DNA sequence of the rabbit, Oryctolagus cuniculus.</title>
        <authorList>
            <person name="Gissi C."/>
            <person name="Gullberg A."/>
            <person name="Arnason U."/>
        </authorList>
    </citation>
    <scope>NUCLEOTIDE SEQUENCE [LARGE SCALE GENOMIC DNA]</scope>
    <source>
        <strain evidence="6">Thorbecke</strain>
    </source>
</reference>
<geneLocation type="mitochondrion"/>
<gene>
    <name evidence="1" type="primary">MT-ATP8</name>
    <name type="synonym">ATP8</name>
    <name type="synonym">ATPASE8</name>
    <name type="synonym">MTATP8</name>
</gene>